<name>HLDE_ECO5E</name>
<organism>
    <name type="scientific">Escherichia coli O157:H7 (strain EC4115 / EHEC)</name>
    <dbReference type="NCBI Taxonomy" id="444450"/>
    <lineage>
        <taxon>Bacteria</taxon>
        <taxon>Pseudomonadati</taxon>
        <taxon>Pseudomonadota</taxon>
        <taxon>Gammaproteobacteria</taxon>
        <taxon>Enterobacterales</taxon>
        <taxon>Enterobacteriaceae</taxon>
        <taxon>Escherichia</taxon>
    </lineage>
</organism>
<sequence>MKVTLPEFERAGVMVVGDVMLDRYWYGPSSRISPEAPVPVVKVNTIEERPGGAANVAMNIASLGANARLVGLTGIDDAARALSKSLADVNVKCDFVSVPTHPTITKLRVLSRNQQLIRLDFEEGFEGVDPQPLHERINQALSSIGALVLSDYAKGALASVQQMIQLARKAGVPVLIDPKGTDFERYRGATLLTPNLSEFEAVVGKCKTEEEIVERGMKLIADYELSALLVTRSEQGMSLLQPGKAPLHMPTQAQEVYDVTGAGDTVIGVLAATLAAGNSLEEACFFANAAAGVVVGKLGTSTVSPIELENAVRGRADTGFGVMTEEELKLAVVAARKRGEKVVMTNGVFDILHAGHVSYLANARKLGDRLIVAVNSDASTKRLKGDSRPVNPLEQRMIVLGALEAVDWVVSFEEDTPQRLIAGILPDLLVKGGDYKPEEIAGSKEVWANGGEVLVLNFEDGCSTTNIIKKIQQDKKG</sequence>
<evidence type="ECO:0000255" key="1">
    <source>
        <dbReference type="HAMAP-Rule" id="MF_01603"/>
    </source>
</evidence>
<gene>
    <name evidence="1" type="primary">hldE</name>
    <name type="ordered locus">ECH74115_4363</name>
</gene>
<accession>B5YR91</accession>
<protein>
    <recommendedName>
        <fullName evidence="1">Bifunctional protein HldE</fullName>
    </recommendedName>
    <domain>
        <recommendedName>
            <fullName evidence="1">D-beta-D-heptose 7-phosphate kinase</fullName>
            <ecNumber evidence="1">2.7.1.167</ecNumber>
        </recommendedName>
        <alternativeName>
            <fullName evidence="1">D-beta-D-heptose 7-phosphotransferase</fullName>
        </alternativeName>
        <alternativeName>
            <fullName evidence="1">D-glycero-beta-D-manno-heptose-7-phosphate kinase</fullName>
        </alternativeName>
    </domain>
    <domain>
        <recommendedName>
            <fullName evidence="1">D-beta-D-heptose 1-phosphate adenylyltransferase</fullName>
            <ecNumber evidence="1">2.7.7.70</ecNumber>
        </recommendedName>
        <alternativeName>
            <fullName evidence="1">D-glycero-beta-D-manno-heptose 1-phosphate adenylyltransferase</fullName>
        </alternativeName>
    </domain>
</protein>
<proteinExistence type="inferred from homology"/>
<comment type="function">
    <text evidence="1">Catalyzes the phosphorylation of D-glycero-D-manno-heptose 7-phosphate at the C-1 position to selectively form D-glycero-beta-D-manno-heptose-1,7-bisphosphate.</text>
</comment>
<comment type="function">
    <text evidence="1">Catalyzes the ADP transfer from ATP to D-glycero-beta-D-manno-heptose 1-phosphate, yielding ADP-D-glycero-beta-D-manno-heptose.</text>
</comment>
<comment type="catalytic activity">
    <reaction evidence="1">
        <text>D-glycero-beta-D-manno-heptose 7-phosphate + ATP = D-glycero-beta-D-manno-heptose 1,7-bisphosphate + ADP + H(+)</text>
        <dbReference type="Rhea" id="RHEA:27473"/>
        <dbReference type="ChEBI" id="CHEBI:15378"/>
        <dbReference type="ChEBI" id="CHEBI:30616"/>
        <dbReference type="ChEBI" id="CHEBI:60204"/>
        <dbReference type="ChEBI" id="CHEBI:60208"/>
        <dbReference type="ChEBI" id="CHEBI:456216"/>
        <dbReference type="EC" id="2.7.1.167"/>
    </reaction>
</comment>
<comment type="catalytic activity">
    <reaction evidence="1">
        <text>D-glycero-beta-D-manno-heptose 1-phosphate + ATP + H(+) = ADP-D-glycero-beta-D-manno-heptose + diphosphate</text>
        <dbReference type="Rhea" id="RHEA:27465"/>
        <dbReference type="ChEBI" id="CHEBI:15378"/>
        <dbReference type="ChEBI" id="CHEBI:30616"/>
        <dbReference type="ChEBI" id="CHEBI:33019"/>
        <dbReference type="ChEBI" id="CHEBI:59967"/>
        <dbReference type="ChEBI" id="CHEBI:61593"/>
        <dbReference type="EC" id="2.7.7.70"/>
    </reaction>
</comment>
<comment type="pathway">
    <text evidence="1">Nucleotide-sugar biosynthesis; ADP-L-glycero-beta-D-manno-heptose biosynthesis; ADP-L-glycero-beta-D-manno-heptose from D-glycero-beta-D-manno-heptose 7-phosphate: step 1/4.</text>
</comment>
<comment type="pathway">
    <text evidence="1">Nucleotide-sugar biosynthesis; ADP-L-glycero-beta-D-manno-heptose biosynthesis; ADP-L-glycero-beta-D-manno-heptose from D-glycero-beta-D-manno-heptose 7-phosphate: step 3/4.</text>
</comment>
<comment type="subunit">
    <text evidence="1">Homodimer.</text>
</comment>
<comment type="similarity">
    <text evidence="1">In the N-terminal section; belongs to the carbohydrate kinase PfkB family.</text>
</comment>
<comment type="similarity">
    <text evidence="1">In the C-terminal section; belongs to the cytidylyltransferase family.</text>
</comment>
<dbReference type="EC" id="2.7.1.167" evidence="1"/>
<dbReference type="EC" id="2.7.7.70" evidence="1"/>
<dbReference type="EMBL" id="CP001164">
    <property type="protein sequence ID" value="ACI34638.1"/>
    <property type="molecule type" value="Genomic_DNA"/>
</dbReference>
<dbReference type="RefSeq" id="WP_000869160.1">
    <property type="nucleotide sequence ID" value="NC_011353.1"/>
</dbReference>
<dbReference type="SMR" id="B5YR91"/>
<dbReference type="KEGG" id="ecf:ECH74115_4363"/>
<dbReference type="HOGENOM" id="CLU_021150_2_1_6"/>
<dbReference type="UniPathway" id="UPA00356">
    <property type="reaction ID" value="UER00437"/>
</dbReference>
<dbReference type="UniPathway" id="UPA00356">
    <property type="reaction ID" value="UER00439"/>
</dbReference>
<dbReference type="GO" id="GO:0005829">
    <property type="term" value="C:cytosol"/>
    <property type="evidence" value="ECO:0007669"/>
    <property type="project" value="TreeGrafter"/>
</dbReference>
<dbReference type="GO" id="GO:0005524">
    <property type="term" value="F:ATP binding"/>
    <property type="evidence" value="ECO:0007669"/>
    <property type="project" value="UniProtKB-UniRule"/>
</dbReference>
<dbReference type="GO" id="GO:0033785">
    <property type="term" value="F:heptose 7-phosphate kinase activity"/>
    <property type="evidence" value="ECO:0007669"/>
    <property type="project" value="UniProtKB-UniRule"/>
</dbReference>
<dbReference type="GO" id="GO:0033786">
    <property type="term" value="F:heptose-1-phosphate adenylyltransferase activity"/>
    <property type="evidence" value="ECO:0007669"/>
    <property type="project" value="UniProtKB-UniRule"/>
</dbReference>
<dbReference type="GO" id="GO:0016773">
    <property type="term" value="F:phosphotransferase activity, alcohol group as acceptor"/>
    <property type="evidence" value="ECO:0007669"/>
    <property type="project" value="InterPro"/>
</dbReference>
<dbReference type="GO" id="GO:0097171">
    <property type="term" value="P:ADP-L-glycero-beta-D-manno-heptose biosynthetic process"/>
    <property type="evidence" value="ECO:0007669"/>
    <property type="project" value="UniProtKB-UniPathway"/>
</dbReference>
<dbReference type="CDD" id="cd01172">
    <property type="entry name" value="RfaE_like"/>
    <property type="match status" value="1"/>
</dbReference>
<dbReference type="FunFam" id="3.40.1190.20:FF:000002">
    <property type="entry name" value="Bifunctional protein HldE"/>
    <property type="match status" value="1"/>
</dbReference>
<dbReference type="FunFam" id="3.40.50.620:FF:000028">
    <property type="entry name" value="Bifunctional protein HldE"/>
    <property type="match status" value="1"/>
</dbReference>
<dbReference type="Gene3D" id="3.40.1190.20">
    <property type="match status" value="1"/>
</dbReference>
<dbReference type="Gene3D" id="3.40.50.620">
    <property type="entry name" value="HUPs"/>
    <property type="match status" value="1"/>
</dbReference>
<dbReference type="HAMAP" id="MF_01603">
    <property type="entry name" value="HldE"/>
    <property type="match status" value="1"/>
</dbReference>
<dbReference type="InterPro" id="IPR023030">
    <property type="entry name" value="Bifunc_HldE"/>
</dbReference>
<dbReference type="InterPro" id="IPR002173">
    <property type="entry name" value="Carboh/pur_kinase_PfkB_CS"/>
</dbReference>
<dbReference type="InterPro" id="IPR004821">
    <property type="entry name" value="Cyt_trans-like"/>
</dbReference>
<dbReference type="InterPro" id="IPR011611">
    <property type="entry name" value="PfkB_dom"/>
</dbReference>
<dbReference type="InterPro" id="IPR011913">
    <property type="entry name" value="RfaE_dom_I"/>
</dbReference>
<dbReference type="InterPro" id="IPR011914">
    <property type="entry name" value="RfaE_dom_II"/>
</dbReference>
<dbReference type="InterPro" id="IPR029056">
    <property type="entry name" value="Ribokinase-like"/>
</dbReference>
<dbReference type="InterPro" id="IPR014729">
    <property type="entry name" value="Rossmann-like_a/b/a_fold"/>
</dbReference>
<dbReference type="NCBIfam" id="TIGR00125">
    <property type="entry name" value="cyt_tran_rel"/>
    <property type="match status" value="1"/>
</dbReference>
<dbReference type="NCBIfam" id="NF008454">
    <property type="entry name" value="PRK11316.1"/>
    <property type="match status" value="1"/>
</dbReference>
<dbReference type="NCBIfam" id="TIGR02198">
    <property type="entry name" value="rfaE_dom_I"/>
    <property type="match status" value="1"/>
</dbReference>
<dbReference type="NCBIfam" id="TIGR02199">
    <property type="entry name" value="rfaE_dom_II"/>
    <property type="match status" value="1"/>
</dbReference>
<dbReference type="PANTHER" id="PTHR46969">
    <property type="entry name" value="BIFUNCTIONAL PROTEIN HLDE"/>
    <property type="match status" value="1"/>
</dbReference>
<dbReference type="PANTHER" id="PTHR46969:SF1">
    <property type="entry name" value="BIFUNCTIONAL PROTEIN HLDE"/>
    <property type="match status" value="1"/>
</dbReference>
<dbReference type="Pfam" id="PF01467">
    <property type="entry name" value="CTP_transf_like"/>
    <property type="match status" value="1"/>
</dbReference>
<dbReference type="Pfam" id="PF00294">
    <property type="entry name" value="PfkB"/>
    <property type="match status" value="1"/>
</dbReference>
<dbReference type="SUPFAM" id="SSF52374">
    <property type="entry name" value="Nucleotidylyl transferase"/>
    <property type="match status" value="1"/>
</dbReference>
<dbReference type="SUPFAM" id="SSF53613">
    <property type="entry name" value="Ribokinase-like"/>
    <property type="match status" value="1"/>
</dbReference>
<dbReference type="PROSITE" id="PS00583">
    <property type="entry name" value="PFKB_KINASES_1"/>
    <property type="match status" value="1"/>
</dbReference>
<feature type="chain" id="PRO_1000185802" description="Bifunctional protein HldE">
    <location>
        <begin position="1"/>
        <end position="477"/>
    </location>
</feature>
<feature type="region of interest" description="Ribokinase">
    <location>
        <begin position="1"/>
        <end position="318"/>
    </location>
</feature>
<feature type="region of interest" description="Cytidylyltransferase">
    <location>
        <begin position="344"/>
        <end position="477"/>
    </location>
</feature>
<feature type="active site" evidence="1">
    <location>
        <position position="264"/>
    </location>
</feature>
<feature type="binding site" evidence="1">
    <location>
        <begin position="195"/>
        <end position="198"/>
    </location>
    <ligand>
        <name>ATP</name>
        <dbReference type="ChEBI" id="CHEBI:30616"/>
    </ligand>
</feature>
<feature type="modified residue" description="N6-acetyllysine" evidence="1">
    <location>
        <position position="179"/>
    </location>
</feature>
<reference key="1">
    <citation type="journal article" date="2011" name="Proc. Natl. Acad. Sci. U.S.A.">
        <title>Genomic anatomy of Escherichia coli O157:H7 outbreaks.</title>
        <authorList>
            <person name="Eppinger M."/>
            <person name="Mammel M.K."/>
            <person name="Leclerc J.E."/>
            <person name="Ravel J."/>
            <person name="Cebula T.A."/>
        </authorList>
    </citation>
    <scope>NUCLEOTIDE SEQUENCE [LARGE SCALE GENOMIC DNA]</scope>
    <source>
        <strain>EC4115 / EHEC</strain>
    </source>
</reference>
<keyword id="KW-0007">Acetylation</keyword>
<keyword id="KW-0067">ATP-binding</keyword>
<keyword id="KW-0119">Carbohydrate metabolism</keyword>
<keyword id="KW-0418">Kinase</keyword>
<keyword id="KW-0511">Multifunctional enzyme</keyword>
<keyword id="KW-0547">Nucleotide-binding</keyword>
<keyword id="KW-0548">Nucleotidyltransferase</keyword>
<keyword id="KW-0808">Transferase</keyword>